<sequence length="239" mass="26436">LGLMEVHFVAAAWQAVEPSDIAVCFREAGFGGGPNATITTALKSEGEEEEEEEEEEEEEEGEGEEEEEEDGEEEEEAGEGEELGEEEEVEEEGDVDTVEEEEEEEEESSSEGLEAEDWAQGVVEAGGSFGGYGAQEEAQCPTLHFLEGEEDSESDSEEEEEDDDEDEDDEDDEEEDDEVPVPSFGEAMAYFAMVKRYLTSSPIDDRVQSHILHLEHDLVHVTRKNHARQAGARGLGHQS</sequence>
<dbReference type="EMBL" id="U35655">
    <property type="protein sequence ID" value="AAA79098.1"/>
    <property type="molecule type" value="mRNA"/>
</dbReference>
<dbReference type="SMR" id="P49451"/>
<dbReference type="STRING" id="9940.ENSOARP00000005057"/>
<dbReference type="PaxDb" id="9940-ENSOARP00000005057"/>
<dbReference type="eggNOG" id="KOG3105">
    <property type="taxonomic scope" value="Eukaryota"/>
</dbReference>
<dbReference type="Proteomes" id="UP000002356">
    <property type="component" value="Unplaced"/>
</dbReference>
<dbReference type="GO" id="GO:0000775">
    <property type="term" value="C:chromosome, centromeric region"/>
    <property type="evidence" value="ECO:0007669"/>
    <property type="project" value="UniProtKB-SubCell"/>
</dbReference>
<dbReference type="GO" id="GO:0005634">
    <property type="term" value="C:nucleus"/>
    <property type="evidence" value="ECO:0007669"/>
    <property type="project" value="UniProtKB-SubCell"/>
</dbReference>
<dbReference type="GO" id="GO:0003682">
    <property type="term" value="F:chromatin binding"/>
    <property type="evidence" value="ECO:0007669"/>
    <property type="project" value="InterPro"/>
</dbReference>
<dbReference type="GO" id="GO:0003677">
    <property type="term" value="F:DNA binding"/>
    <property type="evidence" value="ECO:0007669"/>
    <property type="project" value="UniProtKB-KW"/>
</dbReference>
<dbReference type="FunFam" id="1.10.287.1090:FF:000001">
    <property type="entry name" value="major centromere autoantigen B"/>
    <property type="match status" value="1"/>
</dbReference>
<dbReference type="Gene3D" id="1.10.287.1090">
    <property type="entry name" value="Dimerisation domain of CENP-B"/>
    <property type="match status" value="1"/>
</dbReference>
<dbReference type="InterPro" id="IPR015115">
    <property type="entry name" value="CenpB_C"/>
</dbReference>
<dbReference type="InterPro" id="IPR034882">
    <property type="entry name" value="Dimerisation_CENP-B_sf"/>
</dbReference>
<dbReference type="Pfam" id="PF09026">
    <property type="entry name" value="CENP-B_dimeris"/>
    <property type="match status" value="1"/>
</dbReference>
<dbReference type="SUPFAM" id="SSF101160">
    <property type="entry name" value="Dimerisation domain of CENP-B"/>
    <property type="match status" value="1"/>
</dbReference>
<feature type="chain" id="PRO_0000126127" description="Major centromere autoantigen B">
    <location>
        <begin position="1" status="less than"/>
        <end position="239"/>
    </location>
</feature>
<feature type="region of interest" description="Disordered" evidence="4">
    <location>
        <begin position="28"/>
        <end position="185"/>
    </location>
</feature>
<feature type="region of interest" description="Homodimerization" evidence="1">
    <location>
        <begin position="176"/>
        <end position="239"/>
    </location>
</feature>
<feature type="compositionally biased region" description="Acidic residues" evidence="4">
    <location>
        <begin position="46"/>
        <end position="117"/>
    </location>
</feature>
<feature type="compositionally biased region" description="Acidic residues" evidence="4">
    <location>
        <begin position="148"/>
        <end position="179"/>
    </location>
</feature>
<feature type="modified residue" description="Phosphothreonine" evidence="2">
    <location>
        <position position="37"/>
    </location>
</feature>
<feature type="modified residue" description="Phosphothreonine" evidence="2">
    <location>
        <position position="39"/>
    </location>
</feature>
<feature type="non-terminal residue">
    <location>
        <position position="1"/>
    </location>
</feature>
<comment type="function">
    <text evidence="2">Interacts with centromeric heterochromatin in chromosomes and binds to a specific 17 bp subset of alphoid satellite DNA, called the CENP-B box. May organize arrays of centromere satellite DNA into a higher-order structure which then directs centromere formation and kinetochore assembly in mammalian chromosomes.</text>
</comment>
<comment type="subunit">
    <text evidence="2">Antiparallel homodimer. Interacts with CENPT. Identified in a centromere complex containing histones H2A, H2B and H4, and at least CENPA, CENPB, CENPC, CENPT, CENPN, HJURP, SUPT16H, SSRP1 and RSF1.</text>
</comment>
<comment type="subcellular location">
    <subcellularLocation>
        <location evidence="2">Nucleus</location>
    </subcellularLocation>
    <subcellularLocation>
        <location evidence="2">Chromosome</location>
        <location evidence="2">Centromere</location>
    </subcellularLocation>
</comment>
<comment type="PTM">
    <text evidence="3">Poly-ADP-ribosylated by PARP1.</text>
</comment>
<comment type="PTM">
    <text evidence="2">N-terminally methylated by METTL11A/NTM1. Alpha-N-methylation is stimulated in response extracellular stimuli, including increased cell density and heat shock, and seems to facilitate binding to CENP-B boxes. Chromatin-bound CENP-B is primarily trimethylated (By similarity).</text>
</comment>
<name>CENPB_SHEEP</name>
<evidence type="ECO:0000250" key="1"/>
<evidence type="ECO:0000250" key="2">
    <source>
        <dbReference type="UniProtKB" id="P07199"/>
    </source>
</evidence>
<evidence type="ECO:0000250" key="3">
    <source>
        <dbReference type="UniProtKB" id="P27790"/>
    </source>
</evidence>
<evidence type="ECO:0000256" key="4">
    <source>
        <dbReference type="SAM" id="MobiDB-lite"/>
    </source>
</evidence>
<accession>P49451</accession>
<organism>
    <name type="scientific">Ovis aries</name>
    <name type="common">Sheep</name>
    <dbReference type="NCBI Taxonomy" id="9940"/>
    <lineage>
        <taxon>Eukaryota</taxon>
        <taxon>Metazoa</taxon>
        <taxon>Chordata</taxon>
        <taxon>Craniata</taxon>
        <taxon>Vertebrata</taxon>
        <taxon>Euteleostomi</taxon>
        <taxon>Mammalia</taxon>
        <taxon>Eutheria</taxon>
        <taxon>Laurasiatheria</taxon>
        <taxon>Artiodactyla</taxon>
        <taxon>Ruminantia</taxon>
        <taxon>Pecora</taxon>
        <taxon>Bovidae</taxon>
        <taxon>Caprinae</taxon>
        <taxon>Ovis</taxon>
    </lineage>
</organism>
<proteinExistence type="evidence at transcript level"/>
<protein>
    <recommendedName>
        <fullName>Major centromere autoantigen B</fullName>
    </recommendedName>
    <alternativeName>
        <fullName>Centromere protein B</fullName>
        <shortName>CENP-B</shortName>
    </alternativeName>
</protein>
<gene>
    <name type="primary">CENPB</name>
</gene>
<keyword id="KW-0013">ADP-ribosylation</keyword>
<keyword id="KW-0137">Centromere</keyword>
<keyword id="KW-0158">Chromosome</keyword>
<keyword id="KW-0238">DNA-binding</keyword>
<keyword id="KW-0488">Methylation</keyword>
<keyword id="KW-0539">Nucleus</keyword>
<keyword id="KW-0597">Phosphoprotein</keyword>
<keyword id="KW-1185">Reference proteome</keyword>
<reference key="1">
    <citation type="journal article" date="1996" name="Cytogenet. Cell Genet.">
        <title>Sheep CENPB and CENPC genes show a high level of sequence similarity and conserved synteny with their human homologs.</title>
        <authorList>
            <person name="Burkin D.J."/>
            <person name="Jones C.A."/>
            <person name="Burkin H.R."/>
            <person name="McGrew J.A."/>
            <person name="Broad T.E."/>
        </authorList>
    </citation>
    <scope>NUCLEOTIDE SEQUENCE [MRNA]</scope>
    <source>
        <tissue>Lung</tissue>
    </source>
</reference>